<reference key="1">
    <citation type="journal article" date="2009" name="J. Bacteriol.">
        <title>Complete genome sequence and comparative genome analysis of enteropathogenic Escherichia coli O127:H6 strain E2348/69.</title>
        <authorList>
            <person name="Iguchi A."/>
            <person name="Thomson N.R."/>
            <person name="Ogura Y."/>
            <person name="Saunders D."/>
            <person name="Ooka T."/>
            <person name="Henderson I.R."/>
            <person name="Harris D."/>
            <person name="Asadulghani M."/>
            <person name="Kurokawa K."/>
            <person name="Dean P."/>
            <person name="Kenny B."/>
            <person name="Quail M.A."/>
            <person name="Thurston S."/>
            <person name="Dougan G."/>
            <person name="Hayashi T."/>
            <person name="Parkhill J."/>
            <person name="Frankel G."/>
        </authorList>
    </citation>
    <scope>NUCLEOTIDE SEQUENCE [LARGE SCALE GENOMIC DNA]</scope>
    <source>
        <strain>E2348/69 / EPEC</strain>
    </source>
</reference>
<feature type="chain" id="PRO_1000165093" description="L-fucose isomerase">
    <location>
        <begin position="1"/>
        <end position="591"/>
    </location>
</feature>
<feature type="active site" description="Proton acceptor" evidence="1">
    <location>
        <position position="337"/>
    </location>
</feature>
<feature type="active site" description="Proton acceptor" evidence="1">
    <location>
        <position position="361"/>
    </location>
</feature>
<feature type="binding site" evidence="1">
    <location>
        <position position="337"/>
    </location>
    <ligand>
        <name>Mn(2+)</name>
        <dbReference type="ChEBI" id="CHEBI:29035"/>
    </ligand>
</feature>
<feature type="binding site" evidence="1">
    <location>
        <position position="361"/>
    </location>
    <ligand>
        <name>Mn(2+)</name>
        <dbReference type="ChEBI" id="CHEBI:29035"/>
    </ligand>
</feature>
<feature type="binding site" evidence="1">
    <location>
        <position position="528"/>
    </location>
    <ligand>
        <name>Mn(2+)</name>
        <dbReference type="ChEBI" id="CHEBI:29035"/>
    </ligand>
</feature>
<evidence type="ECO:0000255" key="1">
    <source>
        <dbReference type="HAMAP-Rule" id="MF_01254"/>
    </source>
</evidence>
<proteinExistence type="inferred from homology"/>
<comment type="function">
    <text evidence="1">Converts the aldose L-fucose into the corresponding ketose L-fuculose.</text>
</comment>
<comment type="catalytic activity">
    <reaction evidence="1">
        <text>L-fucose = L-fuculose</text>
        <dbReference type="Rhea" id="RHEA:17233"/>
        <dbReference type="ChEBI" id="CHEBI:2181"/>
        <dbReference type="ChEBI" id="CHEBI:17617"/>
        <dbReference type="EC" id="5.3.1.25"/>
    </reaction>
</comment>
<comment type="cofactor">
    <cofactor evidence="1">
        <name>Mn(2+)</name>
        <dbReference type="ChEBI" id="CHEBI:29035"/>
    </cofactor>
</comment>
<comment type="pathway">
    <text evidence="1">Carbohydrate degradation; L-fucose degradation; L-lactaldehyde and glycerone phosphate from L-fucose: step 1/3.</text>
</comment>
<comment type="subunit">
    <text evidence="1">Homohexamer.</text>
</comment>
<comment type="subcellular location">
    <subcellularLocation>
        <location evidence="1">Cytoplasm</location>
    </subcellularLocation>
</comment>
<comment type="similarity">
    <text evidence="1">Belongs to the L-fucose isomerase family.</text>
</comment>
<gene>
    <name evidence="1" type="primary">fucI</name>
    <name type="ordered locus">E2348C_3069</name>
</gene>
<accession>B7UHL8</accession>
<organism>
    <name type="scientific">Escherichia coli O127:H6 (strain E2348/69 / EPEC)</name>
    <dbReference type="NCBI Taxonomy" id="574521"/>
    <lineage>
        <taxon>Bacteria</taxon>
        <taxon>Pseudomonadati</taxon>
        <taxon>Pseudomonadota</taxon>
        <taxon>Gammaproteobacteria</taxon>
        <taxon>Enterobacterales</taxon>
        <taxon>Enterobacteriaceae</taxon>
        <taxon>Escherichia</taxon>
    </lineage>
</organism>
<sequence>MKKISLPKIGIRPVIDGRRMGVRESLEEQTMNMAKATAALLTEKLRHACGAAVECVISDTCIAGMAEAAACEEKFSSQNVGLTITVTPCWCYGSETIDMDPTRPKAIWGFNGTERPGAVYLAAALAAHSQKGIPAFSIYGHDVQDADDTSIPADVEEKLLRFARAGLAVASMKGKSYLSLGGVSMGIAGSIVDHNFFESWLGMKVQAVDMTELRRRIDQKIYDEAELEMALAWADKNFRYGEDENNKQYQRNAEQSRAVLRESLLMAMCIRDMMQGNSKLADIGRVEESLGYNAIAAGFQGQRHWTDQYPNGDTAEALLNSSFDWNGVREPFVVATENDSLNGVAMLMGHQLTGTAQVFADVRTYWSPEAIERVTGHKLDGLAEHGIIHLINSGSAALDGSCKQRDSEGNPTMKPHWEISQQEADACLAATEWCPAIHEYFRGGGYSSRFLTEGGVPFTMTRVNIIKGLGPVLQIAEGWSVELPKDVHDILNKRTNSTWPTTWFAPRLTGKGPFTDVYSVMANWGANHGVLTIGHVGADFITLASMLRIPVCMHNVEETKVYRPSAWAAHGMDIEGQDYRACQNYGPLYKR</sequence>
<dbReference type="EC" id="5.3.1.25" evidence="1"/>
<dbReference type="EMBL" id="FM180568">
    <property type="protein sequence ID" value="CAS10617.1"/>
    <property type="molecule type" value="Genomic_DNA"/>
</dbReference>
<dbReference type="RefSeq" id="WP_000724164.1">
    <property type="nucleotide sequence ID" value="NC_011601.1"/>
</dbReference>
<dbReference type="SMR" id="B7UHL8"/>
<dbReference type="KEGG" id="ecg:E2348C_3069"/>
<dbReference type="HOGENOM" id="CLU_033326_1_0_6"/>
<dbReference type="UniPathway" id="UPA00563">
    <property type="reaction ID" value="UER00624"/>
</dbReference>
<dbReference type="Proteomes" id="UP000008205">
    <property type="component" value="Chromosome"/>
</dbReference>
<dbReference type="GO" id="GO:0005737">
    <property type="term" value="C:cytoplasm"/>
    <property type="evidence" value="ECO:0007669"/>
    <property type="project" value="UniProtKB-SubCell"/>
</dbReference>
<dbReference type="GO" id="GO:0008790">
    <property type="term" value="F:arabinose isomerase activity"/>
    <property type="evidence" value="ECO:0007669"/>
    <property type="project" value="TreeGrafter"/>
</dbReference>
<dbReference type="GO" id="GO:0008736">
    <property type="term" value="F:L-fucose isomerase activity"/>
    <property type="evidence" value="ECO:0007669"/>
    <property type="project" value="UniProtKB-UniRule"/>
</dbReference>
<dbReference type="GO" id="GO:0030145">
    <property type="term" value="F:manganese ion binding"/>
    <property type="evidence" value="ECO:0007669"/>
    <property type="project" value="UniProtKB-UniRule"/>
</dbReference>
<dbReference type="GO" id="GO:0019571">
    <property type="term" value="P:D-arabinose catabolic process"/>
    <property type="evidence" value="ECO:0007669"/>
    <property type="project" value="TreeGrafter"/>
</dbReference>
<dbReference type="GO" id="GO:0042355">
    <property type="term" value="P:L-fucose catabolic process"/>
    <property type="evidence" value="ECO:0007669"/>
    <property type="project" value="UniProtKB-UniRule"/>
</dbReference>
<dbReference type="CDD" id="cd03556">
    <property type="entry name" value="L-fucose_isomerase"/>
    <property type="match status" value="1"/>
</dbReference>
<dbReference type="FunFam" id="3.20.14.10:FF:000001">
    <property type="entry name" value="L-fucose isomerase"/>
    <property type="match status" value="1"/>
</dbReference>
<dbReference type="FunFam" id="3.40.275.10:FF:000001">
    <property type="entry name" value="L-fucose isomerase"/>
    <property type="match status" value="1"/>
</dbReference>
<dbReference type="FunFam" id="3.40.50.1070:FF:000001">
    <property type="entry name" value="L-fucose isomerase"/>
    <property type="match status" value="1"/>
</dbReference>
<dbReference type="Gene3D" id="3.40.50.1070">
    <property type="match status" value="1"/>
</dbReference>
<dbReference type="Gene3D" id="3.40.275.10">
    <property type="entry name" value="L-fucose Isomerase, Chain A, domain 2"/>
    <property type="match status" value="1"/>
</dbReference>
<dbReference type="Gene3D" id="3.20.14.10">
    <property type="entry name" value="L-fucose/L-arabinose isomerase, C-terminal"/>
    <property type="match status" value="1"/>
</dbReference>
<dbReference type="HAMAP" id="MF_01254">
    <property type="entry name" value="Fucose_iso"/>
    <property type="match status" value="1"/>
</dbReference>
<dbReference type="InterPro" id="IPR004216">
    <property type="entry name" value="Fuc/Ara_isomerase_C"/>
</dbReference>
<dbReference type="InterPro" id="IPR038393">
    <property type="entry name" value="Fuc_iso_dom3_sf"/>
</dbReference>
<dbReference type="InterPro" id="IPR015888">
    <property type="entry name" value="Fuc_isomerase_C"/>
</dbReference>
<dbReference type="InterPro" id="IPR038391">
    <property type="entry name" value="Fucose_iso_dom1_sf"/>
</dbReference>
<dbReference type="InterPro" id="IPR012888">
    <property type="entry name" value="Fucose_iso_N1"/>
</dbReference>
<dbReference type="InterPro" id="IPR005763">
    <property type="entry name" value="Fucose_isomerase"/>
</dbReference>
<dbReference type="InterPro" id="IPR038392">
    <property type="entry name" value="Fucose_isomerase_dom2_sf"/>
</dbReference>
<dbReference type="InterPro" id="IPR009015">
    <property type="entry name" value="Fucose_isomerase_N/cen_sf"/>
</dbReference>
<dbReference type="InterPro" id="IPR012889">
    <property type="entry name" value="Fucose_isomerase_N2"/>
</dbReference>
<dbReference type="NCBIfam" id="TIGR01089">
    <property type="entry name" value="fucI"/>
    <property type="match status" value="1"/>
</dbReference>
<dbReference type="NCBIfam" id="NF008220">
    <property type="entry name" value="PRK10991.1"/>
    <property type="match status" value="1"/>
</dbReference>
<dbReference type="PANTHER" id="PTHR37840">
    <property type="entry name" value="L-FUCOSE ISOMERASE"/>
    <property type="match status" value="1"/>
</dbReference>
<dbReference type="PANTHER" id="PTHR37840:SF1">
    <property type="entry name" value="L-FUCOSE ISOMERASE"/>
    <property type="match status" value="1"/>
</dbReference>
<dbReference type="Pfam" id="PF02952">
    <property type="entry name" value="Fucose_iso_C"/>
    <property type="match status" value="1"/>
</dbReference>
<dbReference type="Pfam" id="PF07881">
    <property type="entry name" value="Fucose_iso_N1"/>
    <property type="match status" value="1"/>
</dbReference>
<dbReference type="Pfam" id="PF07882">
    <property type="entry name" value="Fucose_iso_N2"/>
    <property type="match status" value="1"/>
</dbReference>
<dbReference type="SUPFAM" id="SSF50443">
    <property type="entry name" value="FucI/AraA C-terminal domain-like"/>
    <property type="match status" value="1"/>
</dbReference>
<dbReference type="SUPFAM" id="SSF53743">
    <property type="entry name" value="FucI/AraA N-terminal and middle domains"/>
    <property type="match status" value="1"/>
</dbReference>
<keyword id="KW-0119">Carbohydrate metabolism</keyword>
<keyword id="KW-0963">Cytoplasm</keyword>
<keyword id="KW-0294">Fucose metabolism</keyword>
<keyword id="KW-0413">Isomerase</keyword>
<keyword id="KW-0464">Manganese</keyword>
<keyword id="KW-0479">Metal-binding</keyword>
<keyword id="KW-1185">Reference proteome</keyword>
<protein>
    <recommendedName>
        <fullName evidence="1">L-fucose isomerase</fullName>
        <ecNumber evidence="1">5.3.1.25</ecNumber>
    </recommendedName>
    <alternativeName>
        <fullName evidence="1">6-deoxy-L-galactose isomerase</fullName>
    </alternativeName>
    <alternativeName>
        <fullName>FucIase</fullName>
    </alternativeName>
</protein>
<name>FUCI_ECO27</name>